<comment type="function">
    <text evidence="1">Catalyzes the transfer of acetyl from acetyl-CoA to desacetylmycothiol (Cys-GlcN-Ins) to form mycothiol.</text>
</comment>
<comment type="catalytic activity">
    <reaction evidence="1">
        <text>1D-myo-inositol 2-(L-cysteinylamino)-2-deoxy-alpha-D-glucopyranoside + acetyl-CoA = mycothiol + CoA + H(+)</text>
        <dbReference type="Rhea" id="RHEA:26172"/>
        <dbReference type="ChEBI" id="CHEBI:15378"/>
        <dbReference type="ChEBI" id="CHEBI:16768"/>
        <dbReference type="ChEBI" id="CHEBI:57287"/>
        <dbReference type="ChEBI" id="CHEBI:57288"/>
        <dbReference type="ChEBI" id="CHEBI:58887"/>
        <dbReference type="EC" id="2.3.1.189"/>
    </reaction>
</comment>
<comment type="subunit">
    <text evidence="1">Monomer.</text>
</comment>
<comment type="similarity">
    <text evidence="1">Belongs to the acetyltransferase family. MshD subfamily.</text>
</comment>
<reference key="1">
    <citation type="journal article" date="2003" name="Appl. Microbiol. Biotechnol.">
        <title>The Corynebacterium glutamicum genome: features and impacts on biotechnological processes.</title>
        <authorList>
            <person name="Ikeda M."/>
            <person name="Nakagawa S."/>
        </authorList>
    </citation>
    <scope>NUCLEOTIDE SEQUENCE [LARGE SCALE GENOMIC DNA]</scope>
    <source>
        <strain>ATCC 13032 / DSM 20300 / JCM 1318 / BCRC 11384 / CCUG 27702 / LMG 3730 / NBRC 12168 / NCIMB 10025 / NRRL B-2784 / 534</strain>
    </source>
</reference>
<reference key="2">
    <citation type="journal article" date="2003" name="J. Biotechnol.">
        <title>The complete Corynebacterium glutamicum ATCC 13032 genome sequence and its impact on the production of L-aspartate-derived amino acids and vitamins.</title>
        <authorList>
            <person name="Kalinowski J."/>
            <person name="Bathe B."/>
            <person name="Bartels D."/>
            <person name="Bischoff N."/>
            <person name="Bott M."/>
            <person name="Burkovski A."/>
            <person name="Dusch N."/>
            <person name="Eggeling L."/>
            <person name="Eikmanns B.J."/>
            <person name="Gaigalat L."/>
            <person name="Goesmann A."/>
            <person name="Hartmann M."/>
            <person name="Huthmacher K."/>
            <person name="Kraemer R."/>
            <person name="Linke B."/>
            <person name="McHardy A.C."/>
            <person name="Meyer F."/>
            <person name="Moeckel B."/>
            <person name="Pfefferle W."/>
            <person name="Puehler A."/>
            <person name="Rey D.A."/>
            <person name="Rueckert C."/>
            <person name="Rupp O."/>
            <person name="Sahm H."/>
            <person name="Wendisch V.F."/>
            <person name="Wiegraebe I."/>
            <person name="Tauch A."/>
        </authorList>
    </citation>
    <scope>NUCLEOTIDE SEQUENCE [LARGE SCALE GENOMIC DNA]</scope>
    <source>
        <strain>ATCC 13032 / DSM 20300 / JCM 1318 / BCRC 11384 / CCUG 27702 / LMG 3730 / NBRC 12168 / NCIMB 10025 / NRRL B-2784 / 534</strain>
    </source>
</reference>
<keyword id="KW-0012">Acyltransferase</keyword>
<keyword id="KW-1185">Reference proteome</keyword>
<keyword id="KW-0677">Repeat</keyword>
<keyword id="KW-0808">Transferase</keyword>
<sequence>MNTSDRIKSTQIALDRDLREQALLLLKEVRAVDGVDALSEQFVRGLAEPGLGHSHLIVTLNDKLVGLAATDEETTELAVHPAHRRQGIGKALIDATPTSSIWAHGNTAGAQALASTLRMKKTRELLVMEISDRALDDSAAYKDPDGITHSSLANAPVEKSVAEAKWLQSNNEAFDWHPEQGGWTTHRLAQAQKADWYKDSDVLFLWDGEEIVGFHWVKQHSPELQEIYVVGLSSAYRGRGLGDPLVRLGLHHMRAHGARKVILYVEAGNTPAVAAYEKLGFTVAESHVVYEK</sequence>
<proteinExistence type="inferred from homology"/>
<organism>
    <name type="scientific">Corynebacterium glutamicum (strain ATCC 13032 / DSM 20300 / JCM 1318 / BCRC 11384 / CCUG 27702 / LMG 3730 / NBRC 12168 / NCIMB 10025 / NRRL B-2784 / 534)</name>
    <dbReference type="NCBI Taxonomy" id="196627"/>
    <lineage>
        <taxon>Bacteria</taxon>
        <taxon>Bacillati</taxon>
        <taxon>Actinomycetota</taxon>
        <taxon>Actinomycetes</taxon>
        <taxon>Mycobacteriales</taxon>
        <taxon>Corynebacteriaceae</taxon>
        <taxon>Corynebacterium</taxon>
    </lineage>
</organism>
<name>MSHD_CORGL</name>
<evidence type="ECO:0000255" key="1">
    <source>
        <dbReference type="HAMAP-Rule" id="MF_01698"/>
    </source>
</evidence>
<gene>
    <name evidence="1" type="primary">mshD</name>
    <name type="ordered locus">Cgl2576</name>
    <name type="ordered locus">cg2847</name>
</gene>
<feature type="chain" id="PRO_0000400250" description="Mycothiol acetyltransferase">
    <location>
        <begin position="1"/>
        <end position="292"/>
    </location>
</feature>
<feature type="domain" description="N-acetyltransferase 1" evidence="1">
    <location>
        <begin position="13"/>
        <end position="168"/>
    </location>
</feature>
<feature type="domain" description="N-acetyltransferase 2" evidence="1">
    <location>
        <begin position="159"/>
        <end position="292"/>
    </location>
</feature>
<feature type="binding site" evidence="1">
    <location>
        <position position="40"/>
    </location>
    <ligand>
        <name>1D-myo-inositol 2-(L-cysteinylamino)-2-deoxy-alpha-D-glucopyranoside</name>
        <dbReference type="ChEBI" id="CHEBI:58887"/>
    </ligand>
</feature>
<feature type="binding site" evidence="1">
    <location>
        <begin position="77"/>
        <end position="79"/>
    </location>
    <ligand>
        <name>acetyl-CoA</name>
        <dbReference type="ChEBI" id="CHEBI:57288"/>
        <label>1</label>
    </ligand>
</feature>
<feature type="binding site" evidence="1">
    <location>
        <position position="179"/>
    </location>
    <ligand>
        <name>1D-myo-inositol 2-(L-cysteinylamino)-2-deoxy-alpha-D-glucopyranoside</name>
        <dbReference type="ChEBI" id="CHEBI:58887"/>
    </ligand>
</feature>
<feature type="binding site" evidence="1">
    <location>
        <position position="218"/>
    </location>
    <ligand>
        <name>1D-myo-inositol 2-(L-cysteinylamino)-2-deoxy-alpha-D-glucopyranoside</name>
        <dbReference type="ChEBI" id="CHEBI:58887"/>
    </ligand>
</feature>
<feature type="binding site" evidence="1">
    <location>
        <position position="226"/>
    </location>
    <ligand>
        <name>1D-myo-inositol 2-(L-cysteinylamino)-2-deoxy-alpha-D-glucopyranoside</name>
        <dbReference type="ChEBI" id="CHEBI:58887"/>
    </ligand>
</feature>
<feature type="binding site" evidence="1">
    <location>
        <begin position="230"/>
        <end position="232"/>
    </location>
    <ligand>
        <name>acetyl-CoA</name>
        <dbReference type="ChEBI" id="CHEBI:57288"/>
        <label>2</label>
    </ligand>
</feature>
<feature type="binding site" evidence="1">
    <location>
        <begin position="237"/>
        <end position="243"/>
    </location>
    <ligand>
        <name>acetyl-CoA</name>
        <dbReference type="ChEBI" id="CHEBI:57288"/>
        <label>2</label>
    </ligand>
</feature>
<feature type="binding site" evidence="1">
    <location>
        <position position="264"/>
    </location>
    <ligand>
        <name>1D-myo-inositol 2-(L-cysteinylamino)-2-deoxy-alpha-D-glucopyranoside</name>
        <dbReference type="ChEBI" id="CHEBI:58887"/>
    </ligand>
</feature>
<protein>
    <recommendedName>
        <fullName evidence="1">Mycothiol acetyltransferase</fullName>
        <shortName evidence="1">MSH acetyltransferase</shortName>
        <ecNumber evidence="1">2.3.1.189</ecNumber>
    </recommendedName>
    <alternativeName>
        <fullName evidence="1">Mycothiol synthase</fullName>
    </alternativeName>
</protein>
<dbReference type="EC" id="2.3.1.189" evidence="1"/>
<dbReference type="EMBL" id="BA000036">
    <property type="protein sequence ID" value="BAB99969.1"/>
    <property type="molecule type" value="Genomic_DNA"/>
</dbReference>
<dbReference type="EMBL" id="BX927155">
    <property type="protein sequence ID" value="CAF21237.1"/>
    <property type="molecule type" value="Genomic_DNA"/>
</dbReference>
<dbReference type="RefSeq" id="NP_601774.1">
    <property type="nucleotide sequence ID" value="NC_003450.3"/>
</dbReference>
<dbReference type="RefSeq" id="WP_011015225.1">
    <property type="nucleotide sequence ID" value="NC_006958.1"/>
</dbReference>
<dbReference type="SMR" id="Q8NMJ7"/>
<dbReference type="STRING" id="196627.cg2847"/>
<dbReference type="GeneID" id="1020522"/>
<dbReference type="KEGG" id="cgb:cg2847"/>
<dbReference type="KEGG" id="cgl:Cgl2576"/>
<dbReference type="PATRIC" id="fig|196627.13.peg.2510"/>
<dbReference type="eggNOG" id="COG0456">
    <property type="taxonomic scope" value="Bacteria"/>
</dbReference>
<dbReference type="HOGENOM" id="CLU_068014_0_0_11"/>
<dbReference type="OrthoDB" id="3208058at2"/>
<dbReference type="BioCyc" id="CORYNE:G18NG-12192-MONOMER"/>
<dbReference type="Proteomes" id="UP000000582">
    <property type="component" value="Chromosome"/>
</dbReference>
<dbReference type="Proteomes" id="UP000001009">
    <property type="component" value="Chromosome"/>
</dbReference>
<dbReference type="GO" id="GO:0035447">
    <property type="term" value="F:mycothiol synthase activity"/>
    <property type="evidence" value="ECO:0007669"/>
    <property type="project" value="UniProtKB-UniRule"/>
</dbReference>
<dbReference type="GO" id="GO:0008999">
    <property type="term" value="F:protein-N-terminal-alanine acetyltransferase activity"/>
    <property type="evidence" value="ECO:0007669"/>
    <property type="project" value="TreeGrafter"/>
</dbReference>
<dbReference type="GO" id="GO:0010125">
    <property type="term" value="P:mycothiol biosynthetic process"/>
    <property type="evidence" value="ECO:0007669"/>
    <property type="project" value="UniProtKB-UniRule"/>
</dbReference>
<dbReference type="CDD" id="cd04301">
    <property type="entry name" value="NAT_SF"/>
    <property type="match status" value="2"/>
</dbReference>
<dbReference type="Gene3D" id="3.40.630.30">
    <property type="match status" value="1"/>
</dbReference>
<dbReference type="HAMAP" id="MF_01698">
    <property type="entry name" value="MshD"/>
    <property type="match status" value="1"/>
</dbReference>
<dbReference type="InterPro" id="IPR016181">
    <property type="entry name" value="Acyl_CoA_acyltransferase"/>
</dbReference>
<dbReference type="InterPro" id="IPR000182">
    <property type="entry name" value="GNAT_dom"/>
</dbReference>
<dbReference type="InterPro" id="IPR050276">
    <property type="entry name" value="MshD_Acetyltransferase"/>
</dbReference>
<dbReference type="InterPro" id="IPR017813">
    <property type="entry name" value="Mycothiol_AcTrfase"/>
</dbReference>
<dbReference type="NCBIfam" id="TIGR03448">
    <property type="entry name" value="mycothiol_MshD"/>
    <property type="match status" value="1"/>
</dbReference>
<dbReference type="PANTHER" id="PTHR43617">
    <property type="entry name" value="L-AMINO ACID N-ACETYLTRANSFERASE"/>
    <property type="match status" value="1"/>
</dbReference>
<dbReference type="PANTHER" id="PTHR43617:SF31">
    <property type="entry name" value="MYCOTHIOL ACETYLTRANSFERASE"/>
    <property type="match status" value="1"/>
</dbReference>
<dbReference type="Pfam" id="PF00583">
    <property type="entry name" value="Acetyltransf_1"/>
    <property type="match status" value="1"/>
</dbReference>
<dbReference type="Pfam" id="PF13508">
    <property type="entry name" value="Acetyltransf_7"/>
    <property type="match status" value="1"/>
</dbReference>
<dbReference type="PIRSF" id="PIRSF021524">
    <property type="entry name" value="MSH_acetyltransferase"/>
    <property type="match status" value="1"/>
</dbReference>
<dbReference type="SUPFAM" id="SSF55729">
    <property type="entry name" value="Acyl-CoA N-acyltransferases (Nat)"/>
    <property type="match status" value="2"/>
</dbReference>
<dbReference type="PROSITE" id="PS51186">
    <property type="entry name" value="GNAT"/>
    <property type="match status" value="2"/>
</dbReference>
<accession>Q8NMJ7</accession>
<accession>Q6M2Q7</accession>